<comment type="function">
    <text evidence="2 3 5">Guanine nucleotide-binding proteins (G proteins) are involved as modulators or transducers in various transmembrane signaling systems (PubMed:12176367). Activates effector molecule RhoA by binding and activating RhoGEFs (ARHGEF1/p115RhoGEF, ARHGEF11/PDZ-RhoGEF and ARHGEF12/LARG) (By similarity). GNA13-dependent Rho signaling subsequently regulates transcription factor AP-1 (activating protein-1) (By similarity). Promotes tumor cell invasion and metastasis by activating RhoA/ROCK signaling pathway (By similarity). Inhibits CDH1-mediated cell adhesion in process independent from Rho activation (By similarity). In lymphoid follicles, transmits P2RY8- and S1PR2-dependent signals that lead to inhibition of germinal center (GC) B cell growth and migration outside the GC niche.</text>
</comment>
<comment type="subunit">
    <text evidence="2 3 5">G proteins are composed of 3 units; alpha, beta and gamma (By similarity). The alpha chain contains the guanine nucleotide binding site (By similarity). Interacts with UBXD5 (By similarity). Interacts with HAX1 (By similarity). Interacts (in GTP-bound form) with PPP5C (via TPR repeats); activates PPP5C phosphatase activity and translocates PPP5C to the cell membrane (PubMed:12176367). Interacts with RGS22 (By similarity). Interacts with ARHGEF1. Interacts (in GTP-bound form) with ARHGEF11 (via RGS domain) (By similarity). Interacts (in GTP-bound form) with ARHGEF12 (via RGS domain) (By similarity). Interacts (in GTP-bound form) with CTNND1 (By similarity). Interacts with GAS2L2 (By similarity). Interacts with GPR35 (By similarity). Interacts with GPR174 (By similarity).</text>
</comment>
<comment type="subcellular location">
    <subcellularLocation>
        <location evidence="5">Membrane</location>
        <topology evidence="5">Lipid-anchor</topology>
    </subcellularLocation>
    <subcellularLocation>
        <location evidence="3">Melanosome</location>
    </subcellularLocation>
    <subcellularLocation>
        <location evidence="3">Cytoplasm</location>
    </subcellularLocation>
    <subcellularLocation>
        <location evidence="3">Nucleus</location>
    </subcellularLocation>
    <text evidence="3">Cytoplasmic in adult somatic cells, but mainly nuclear in spermatids in the testes. Translocates from the cytoplasm to the nucleus during spermatogenesis, hence predominantly observed in the cytoplasm of round spermatids but localized in the nuclei of elongating or elongated spermatids and testicular spermatozoa.</text>
</comment>
<comment type="PTM">
    <text evidence="1">Palmitoylation is critical for proper membrane localization and signaling.</text>
</comment>
<comment type="PTM">
    <text>Phosphorylation on Thr-203 by PKA destabilizes the heterotrimer of alpha, beta and gamma, and inhibits Rho activation.</text>
</comment>
<comment type="similarity">
    <text evidence="6">Belongs to the G-alpha family. G(12) subfamily.</text>
</comment>
<protein>
    <recommendedName>
        <fullName>Guanine nucleotide-binding protein subunit alpha-13</fullName>
        <shortName>G alpha-13</shortName>
        <shortName>G-protein subunit alpha-13</shortName>
    </recommendedName>
</protein>
<evidence type="ECO:0000250" key="1"/>
<evidence type="ECO:0000250" key="2">
    <source>
        <dbReference type="UniProtKB" id="P27601"/>
    </source>
</evidence>
<evidence type="ECO:0000250" key="3">
    <source>
        <dbReference type="UniProtKB" id="Q14344"/>
    </source>
</evidence>
<evidence type="ECO:0000255" key="4">
    <source>
        <dbReference type="PROSITE-ProRule" id="PRU01230"/>
    </source>
</evidence>
<evidence type="ECO:0000269" key="5">
    <source>
    </source>
</evidence>
<evidence type="ECO:0000305" key="6"/>
<dbReference type="EMBL" id="AY553631">
    <property type="protein sequence ID" value="AAS64389.1"/>
    <property type="molecule type" value="mRNA"/>
</dbReference>
<dbReference type="EMBL" id="AY553632">
    <property type="protein sequence ID" value="AAS64390.1"/>
    <property type="molecule type" value="mRNA"/>
</dbReference>
<dbReference type="EMBL" id="DQ120481">
    <property type="protein sequence ID" value="AAZ23820.1"/>
    <property type="molecule type" value="mRNA"/>
</dbReference>
<dbReference type="EMBL" id="DQ120482">
    <property type="protein sequence ID" value="AAZ23821.1"/>
    <property type="molecule type" value="mRNA"/>
</dbReference>
<dbReference type="RefSeq" id="NP_001013137.1">
    <property type="nucleotide sequence ID" value="NM_001013119.1"/>
</dbReference>
<dbReference type="SMR" id="Q6Q7Y5"/>
<dbReference type="CORUM" id="Q6Q7Y5"/>
<dbReference type="FunCoup" id="Q6Q7Y5">
    <property type="interactions" value="3382"/>
</dbReference>
<dbReference type="IntAct" id="Q6Q7Y5">
    <property type="interactions" value="1"/>
</dbReference>
<dbReference type="STRING" id="10116.ENSRNOP00000051938"/>
<dbReference type="iPTMnet" id="Q6Q7Y5"/>
<dbReference type="PhosphoSitePlus" id="Q6Q7Y5"/>
<dbReference type="SwissPalm" id="Q6Q7Y5"/>
<dbReference type="jPOST" id="Q6Q7Y5"/>
<dbReference type="PaxDb" id="10116-ENSRNOP00000051938"/>
<dbReference type="Ensembl" id="ENSRNOT00000118369.1">
    <property type="protein sequence ID" value="ENSRNOP00000076869.1"/>
    <property type="gene ID" value="ENSRNOG00000063135.1"/>
</dbReference>
<dbReference type="GeneID" id="303634"/>
<dbReference type="KEGG" id="rno:303634"/>
<dbReference type="AGR" id="RGD:1310221"/>
<dbReference type="CTD" id="10672"/>
<dbReference type="RGD" id="1310221">
    <property type="gene designation" value="Gna13"/>
</dbReference>
<dbReference type="eggNOG" id="KOG0082">
    <property type="taxonomic scope" value="Eukaryota"/>
</dbReference>
<dbReference type="GeneTree" id="ENSGT00940000157054"/>
<dbReference type="HOGENOM" id="CLU_014184_3_1_1"/>
<dbReference type="InParanoid" id="Q6Q7Y5"/>
<dbReference type="OMA" id="RFACMRC"/>
<dbReference type="OrthoDB" id="5817230at2759"/>
<dbReference type="PhylomeDB" id="Q6Q7Y5"/>
<dbReference type="Reactome" id="R-RNO-193648">
    <property type="pathway name" value="NRAGE signals death through JNK"/>
</dbReference>
<dbReference type="Reactome" id="R-RNO-416482">
    <property type="pathway name" value="G alpha (12/13) signalling events"/>
</dbReference>
<dbReference type="Reactome" id="R-RNO-428930">
    <property type="pathway name" value="Thromboxane signalling through TP receptor"/>
</dbReference>
<dbReference type="Reactome" id="R-RNO-9013148">
    <property type="pathway name" value="CDC42 GTPase cycle"/>
</dbReference>
<dbReference type="Reactome" id="R-RNO-9013149">
    <property type="pathway name" value="RAC1 GTPase cycle"/>
</dbReference>
<dbReference type="PRO" id="PR:Q6Q7Y5"/>
<dbReference type="Proteomes" id="UP000002494">
    <property type="component" value="Chromosome 10"/>
</dbReference>
<dbReference type="Bgee" id="ENSRNOG00000036745">
    <property type="expression patterns" value="Expressed in duodenum and 19 other cell types or tissues"/>
</dbReference>
<dbReference type="GO" id="GO:0031526">
    <property type="term" value="C:brush border membrane"/>
    <property type="evidence" value="ECO:0000314"/>
    <property type="project" value="RGD"/>
</dbReference>
<dbReference type="GO" id="GO:0005737">
    <property type="term" value="C:cytoplasm"/>
    <property type="evidence" value="ECO:0000250"/>
    <property type="project" value="UniProtKB"/>
</dbReference>
<dbReference type="GO" id="GO:0005834">
    <property type="term" value="C:heterotrimeric G-protein complex"/>
    <property type="evidence" value="ECO:0000318"/>
    <property type="project" value="GO_Central"/>
</dbReference>
<dbReference type="GO" id="GO:0042470">
    <property type="term" value="C:melanosome"/>
    <property type="evidence" value="ECO:0007669"/>
    <property type="project" value="UniProtKB-SubCell"/>
</dbReference>
<dbReference type="GO" id="GO:0005634">
    <property type="term" value="C:nucleus"/>
    <property type="evidence" value="ECO:0000250"/>
    <property type="project" value="UniProtKB"/>
</dbReference>
<dbReference type="GO" id="GO:0098794">
    <property type="term" value="C:postsynapse"/>
    <property type="evidence" value="ECO:0000266"/>
    <property type="project" value="RGD"/>
</dbReference>
<dbReference type="GO" id="GO:0031752">
    <property type="term" value="F:D5 dopamine receptor binding"/>
    <property type="evidence" value="ECO:0000353"/>
    <property type="project" value="RGD"/>
</dbReference>
<dbReference type="GO" id="GO:0003925">
    <property type="term" value="F:G protein activity"/>
    <property type="evidence" value="ECO:0000250"/>
    <property type="project" value="UniProtKB"/>
</dbReference>
<dbReference type="GO" id="GO:0031683">
    <property type="term" value="F:G-protein beta/gamma-subunit complex binding"/>
    <property type="evidence" value="ECO:0000318"/>
    <property type="project" value="GO_Central"/>
</dbReference>
<dbReference type="GO" id="GO:0005525">
    <property type="term" value="F:GTP binding"/>
    <property type="evidence" value="ECO:0007669"/>
    <property type="project" value="UniProtKB-KW"/>
</dbReference>
<dbReference type="GO" id="GO:0003924">
    <property type="term" value="F:GTPase activity"/>
    <property type="evidence" value="ECO:0000318"/>
    <property type="project" value="GO_Central"/>
</dbReference>
<dbReference type="GO" id="GO:0046872">
    <property type="term" value="F:metal ion binding"/>
    <property type="evidence" value="ECO:0007669"/>
    <property type="project" value="UniProtKB-KW"/>
</dbReference>
<dbReference type="GO" id="GO:0007189">
    <property type="term" value="P:adenylate cyclase-activating G protein-coupled receptor signaling pathway"/>
    <property type="evidence" value="ECO:0000266"/>
    <property type="project" value="RGD"/>
</dbReference>
<dbReference type="GO" id="GO:0007188">
    <property type="term" value="P:adenylate cyclase-modulating G protein-coupled receptor signaling pathway"/>
    <property type="evidence" value="ECO:0000250"/>
    <property type="project" value="UniProtKB"/>
</dbReference>
<dbReference type="GO" id="GO:0001525">
    <property type="term" value="P:angiogenesis"/>
    <property type="evidence" value="ECO:0000266"/>
    <property type="project" value="RGD"/>
</dbReference>
<dbReference type="GO" id="GO:0001569">
    <property type="term" value="P:branching involved in blood vessel morphogenesis"/>
    <property type="evidence" value="ECO:0000266"/>
    <property type="project" value="RGD"/>
</dbReference>
<dbReference type="GO" id="GO:0030154">
    <property type="term" value="P:cell differentiation"/>
    <property type="evidence" value="ECO:0000266"/>
    <property type="project" value="RGD"/>
</dbReference>
<dbReference type="GO" id="GO:0007186">
    <property type="term" value="P:G protein-coupled receptor signaling pathway"/>
    <property type="evidence" value="ECO:0000315"/>
    <property type="project" value="MGI"/>
</dbReference>
<dbReference type="GO" id="GO:0001701">
    <property type="term" value="P:in utero embryonic development"/>
    <property type="evidence" value="ECO:0000266"/>
    <property type="project" value="RGD"/>
</dbReference>
<dbReference type="GO" id="GO:0035556">
    <property type="term" value="P:intracellular signal transduction"/>
    <property type="evidence" value="ECO:0000266"/>
    <property type="project" value="RGD"/>
</dbReference>
<dbReference type="GO" id="GO:1904753">
    <property type="term" value="P:negative regulation of vascular associated smooth muscle cell migration"/>
    <property type="evidence" value="ECO:0000315"/>
    <property type="project" value="MGI"/>
</dbReference>
<dbReference type="GO" id="GO:1904706">
    <property type="term" value="P:negative regulation of vascular associated smooth muscle cell proliferation"/>
    <property type="evidence" value="ECO:0000315"/>
    <property type="project" value="MGI"/>
</dbReference>
<dbReference type="GO" id="GO:0030168">
    <property type="term" value="P:platelet activation"/>
    <property type="evidence" value="ECO:0000266"/>
    <property type="project" value="RGD"/>
</dbReference>
<dbReference type="GO" id="GO:0007204">
    <property type="term" value="P:positive regulation of cytosolic calcium ion concentration"/>
    <property type="evidence" value="ECO:0000315"/>
    <property type="project" value="RGD"/>
</dbReference>
<dbReference type="GO" id="GO:0008217">
    <property type="term" value="P:regulation of blood pressure"/>
    <property type="evidence" value="ECO:0000266"/>
    <property type="project" value="RGD"/>
</dbReference>
<dbReference type="GO" id="GO:0008360">
    <property type="term" value="P:regulation of cell shape"/>
    <property type="evidence" value="ECO:0000266"/>
    <property type="project" value="RGD"/>
</dbReference>
<dbReference type="GO" id="GO:0010762">
    <property type="term" value="P:regulation of fibroblast migration"/>
    <property type="evidence" value="ECO:0000266"/>
    <property type="project" value="RGD"/>
</dbReference>
<dbReference type="GO" id="GO:0150052">
    <property type="term" value="P:regulation of postsynapse assembly"/>
    <property type="evidence" value="ECO:0000266"/>
    <property type="project" value="RGD"/>
</dbReference>
<dbReference type="GO" id="GO:0007266">
    <property type="term" value="P:Rho protein signal transduction"/>
    <property type="evidence" value="ECO:0000266"/>
    <property type="project" value="RGD"/>
</dbReference>
<dbReference type="GO" id="GO:0160221">
    <property type="term" value="P:Rho-activating G protein-coupled receptor signaling pathway"/>
    <property type="evidence" value="ECO:0000250"/>
    <property type="project" value="UniProtKB"/>
</dbReference>
<dbReference type="CDD" id="cd00066">
    <property type="entry name" value="G-alpha"/>
    <property type="match status" value="1"/>
</dbReference>
<dbReference type="FunFam" id="3.40.50.300:FF:000692">
    <property type="entry name" value="Guanine nucleotide-binding protein subunit alpha"/>
    <property type="match status" value="1"/>
</dbReference>
<dbReference type="FunFam" id="1.10.400.10:FF:000004">
    <property type="entry name" value="Guanine nucleotide-binding protein subunit alpha-12"/>
    <property type="match status" value="1"/>
</dbReference>
<dbReference type="FunFam" id="3.40.50.300:FF:000754">
    <property type="entry name" value="Guanine nucleotide-binding protein subunit alpha-13"/>
    <property type="match status" value="1"/>
</dbReference>
<dbReference type="Gene3D" id="1.10.400.10">
    <property type="entry name" value="GI Alpha 1, domain 2-like"/>
    <property type="match status" value="1"/>
</dbReference>
<dbReference type="Gene3D" id="3.40.50.300">
    <property type="entry name" value="P-loop containing nucleotide triphosphate hydrolases"/>
    <property type="match status" value="1"/>
</dbReference>
<dbReference type="InterPro" id="IPR000469">
    <property type="entry name" value="Gprotein_alpha_12/13"/>
</dbReference>
<dbReference type="InterPro" id="IPR001019">
    <property type="entry name" value="Gprotein_alpha_su"/>
</dbReference>
<dbReference type="InterPro" id="IPR011025">
    <property type="entry name" value="GproteinA_insert"/>
</dbReference>
<dbReference type="InterPro" id="IPR027417">
    <property type="entry name" value="P-loop_NTPase"/>
</dbReference>
<dbReference type="PANTHER" id="PTHR10218">
    <property type="entry name" value="GTP-BINDING PROTEIN ALPHA SUBUNIT"/>
    <property type="match status" value="1"/>
</dbReference>
<dbReference type="PANTHER" id="PTHR10218:SF85">
    <property type="entry name" value="GUANINE NUCLEOTIDE-BINDING PROTEIN SUBUNIT ALPHA-13"/>
    <property type="match status" value="1"/>
</dbReference>
<dbReference type="Pfam" id="PF00503">
    <property type="entry name" value="G-alpha"/>
    <property type="match status" value="1"/>
</dbReference>
<dbReference type="PRINTS" id="PR00318">
    <property type="entry name" value="GPROTEINA"/>
</dbReference>
<dbReference type="PRINTS" id="PR00440">
    <property type="entry name" value="GPROTEINA12"/>
</dbReference>
<dbReference type="SMART" id="SM00275">
    <property type="entry name" value="G_alpha"/>
    <property type="match status" value="1"/>
</dbReference>
<dbReference type="SUPFAM" id="SSF52540">
    <property type="entry name" value="P-loop containing nucleoside triphosphate hydrolases"/>
    <property type="match status" value="1"/>
</dbReference>
<dbReference type="SUPFAM" id="SSF47895">
    <property type="entry name" value="Transducin (alpha subunit), insertion domain"/>
    <property type="match status" value="1"/>
</dbReference>
<dbReference type="PROSITE" id="PS51882">
    <property type="entry name" value="G_ALPHA"/>
    <property type="match status" value="1"/>
</dbReference>
<gene>
    <name type="primary">Gna13</name>
</gene>
<name>GNA13_RAT</name>
<proteinExistence type="evidence at protein level"/>
<feature type="chain" id="PRO_0000424080" description="Guanine nucleotide-binding protein subunit alpha-13">
    <location>
        <begin position="1"/>
        <end position="377"/>
    </location>
</feature>
<feature type="domain" description="G-alpha" evidence="4">
    <location>
        <begin position="47"/>
        <end position="377"/>
    </location>
</feature>
<feature type="region of interest" description="G1 motif" evidence="4">
    <location>
        <begin position="50"/>
        <end position="63"/>
    </location>
</feature>
<feature type="region of interest" description="G2 motif" evidence="4">
    <location>
        <begin position="195"/>
        <end position="203"/>
    </location>
</feature>
<feature type="region of interest" description="G3 motif" evidence="4">
    <location>
        <begin position="218"/>
        <end position="227"/>
    </location>
</feature>
<feature type="region of interest" description="G4 motif" evidence="4">
    <location>
        <begin position="287"/>
        <end position="294"/>
    </location>
</feature>
<feature type="region of interest" description="G5 motif" evidence="4">
    <location>
        <begin position="347"/>
        <end position="352"/>
    </location>
</feature>
<feature type="binding site" evidence="2">
    <location>
        <begin position="58"/>
        <end position="63"/>
    </location>
    <ligand>
        <name>GTP</name>
        <dbReference type="ChEBI" id="CHEBI:37565"/>
    </ligand>
</feature>
<feature type="binding site" evidence="2">
    <location>
        <position position="62"/>
    </location>
    <ligand>
        <name>Mg(2+)</name>
        <dbReference type="ChEBI" id="CHEBI:18420"/>
    </ligand>
</feature>
<feature type="binding site" evidence="2">
    <location>
        <position position="173"/>
    </location>
    <ligand>
        <name>GTP</name>
        <dbReference type="ChEBI" id="CHEBI:37565"/>
    </ligand>
</feature>
<feature type="binding site" evidence="2">
    <location>
        <begin position="197"/>
        <end position="200"/>
    </location>
    <ligand>
        <name>GTP</name>
        <dbReference type="ChEBI" id="CHEBI:37565"/>
    </ligand>
</feature>
<feature type="binding site" evidence="2">
    <location>
        <position position="203"/>
    </location>
    <ligand>
        <name>Mg(2+)</name>
        <dbReference type="ChEBI" id="CHEBI:18420"/>
    </ligand>
</feature>
<feature type="binding site" evidence="2">
    <location>
        <begin position="291"/>
        <end position="294"/>
    </location>
    <ligand>
        <name>GTP</name>
        <dbReference type="ChEBI" id="CHEBI:37565"/>
    </ligand>
</feature>
<feature type="binding site" evidence="2">
    <location>
        <position position="349"/>
    </location>
    <ligand>
        <name>GTP</name>
        <dbReference type="ChEBI" id="CHEBI:37565"/>
    </ligand>
</feature>
<feature type="modified residue" description="Phosphothreonine; by PKA" evidence="3">
    <location>
        <position position="203"/>
    </location>
</feature>
<feature type="lipid moiety-binding region" description="S-palmitoyl cysteine" evidence="3">
    <location>
        <position position="14"/>
    </location>
</feature>
<feature type="lipid moiety-binding region" description="S-palmitoyl cysteine" evidence="3">
    <location>
        <position position="18"/>
    </location>
</feature>
<feature type="mutagenesis site" description="Constitutively active. Interacts with PPP5C, activates its phosphatase activity and translocates PPP5C to the plasma membrane." evidence="5">
    <original>Q</original>
    <variation>L</variation>
    <location>
        <position position="226"/>
    </location>
</feature>
<organism>
    <name type="scientific">Rattus norvegicus</name>
    <name type="common">Rat</name>
    <dbReference type="NCBI Taxonomy" id="10116"/>
    <lineage>
        <taxon>Eukaryota</taxon>
        <taxon>Metazoa</taxon>
        <taxon>Chordata</taxon>
        <taxon>Craniata</taxon>
        <taxon>Vertebrata</taxon>
        <taxon>Euteleostomi</taxon>
        <taxon>Mammalia</taxon>
        <taxon>Eutheria</taxon>
        <taxon>Euarchontoglires</taxon>
        <taxon>Glires</taxon>
        <taxon>Rodentia</taxon>
        <taxon>Myomorpha</taxon>
        <taxon>Muroidea</taxon>
        <taxon>Muridae</taxon>
        <taxon>Murinae</taxon>
        <taxon>Rattus</taxon>
    </lineage>
</organism>
<keyword id="KW-0963">Cytoplasm</keyword>
<keyword id="KW-0342">GTP-binding</keyword>
<keyword id="KW-0449">Lipoprotein</keyword>
<keyword id="KW-0460">Magnesium</keyword>
<keyword id="KW-0472">Membrane</keyword>
<keyword id="KW-0479">Metal-binding</keyword>
<keyword id="KW-0547">Nucleotide-binding</keyword>
<keyword id="KW-0539">Nucleus</keyword>
<keyword id="KW-0564">Palmitate</keyword>
<keyword id="KW-0597">Phosphoprotein</keyword>
<keyword id="KW-1185">Reference proteome</keyword>
<keyword id="KW-0807">Transducer</keyword>
<reference key="1">
    <citation type="submission" date="2005-07" db="EMBL/GenBank/DDBJ databases">
        <title>Genetic similarity between spontaneously hypertensive rats and wistar-kyoto rats in the coding regions of signal transduction proteins.</title>
        <authorList>
            <person name="Jackson E.K."/>
            <person name="Zhu C."/>
        </authorList>
    </citation>
    <scope>NUCLEOTIDE SEQUENCE [MRNA]</scope>
    <source>
        <strain>SHR</strain>
        <strain>Wistar Kyoto</strain>
    </source>
</reference>
<reference key="2">
    <citation type="journal article" date="2004" name="Nature">
        <title>Genome sequence of the Brown Norway rat yields insights into mammalian evolution.</title>
        <authorList>
            <person name="Gibbs R.A."/>
            <person name="Weinstock G.M."/>
            <person name="Metzker M.L."/>
            <person name="Muzny D.M."/>
            <person name="Sodergren E.J."/>
            <person name="Scherer S."/>
            <person name="Scott G."/>
            <person name="Steffen D."/>
            <person name="Worley K.C."/>
            <person name="Burch P.E."/>
            <person name="Okwuonu G."/>
            <person name="Hines S."/>
            <person name="Lewis L."/>
            <person name="Deramo C."/>
            <person name="Delgado O."/>
            <person name="Dugan-Rocha S."/>
            <person name="Miner G."/>
            <person name="Morgan M."/>
            <person name="Hawes A."/>
            <person name="Gill R."/>
            <person name="Holt R.A."/>
            <person name="Adams M.D."/>
            <person name="Amanatides P.G."/>
            <person name="Baden-Tillson H."/>
            <person name="Barnstead M."/>
            <person name="Chin S."/>
            <person name="Evans C.A."/>
            <person name="Ferriera S."/>
            <person name="Fosler C."/>
            <person name="Glodek A."/>
            <person name="Gu Z."/>
            <person name="Jennings D."/>
            <person name="Kraft C.L."/>
            <person name="Nguyen T."/>
            <person name="Pfannkoch C.M."/>
            <person name="Sitter C."/>
            <person name="Sutton G.G."/>
            <person name="Venter J.C."/>
            <person name="Woodage T."/>
            <person name="Smith D."/>
            <person name="Lee H.-M."/>
            <person name="Gustafson E."/>
            <person name="Cahill P."/>
            <person name="Kana A."/>
            <person name="Doucette-Stamm L."/>
            <person name="Weinstock K."/>
            <person name="Fechtel K."/>
            <person name="Weiss R.B."/>
            <person name="Dunn D.M."/>
            <person name="Green E.D."/>
            <person name="Blakesley R.W."/>
            <person name="Bouffard G.G."/>
            <person name="De Jong P.J."/>
            <person name="Osoegawa K."/>
            <person name="Zhu B."/>
            <person name="Marra M."/>
            <person name="Schein J."/>
            <person name="Bosdet I."/>
            <person name="Fjell C."/>
            <person name="Jones S."/>
            <person name="Krzywinski M."/>
            <person name="Mathewson C."/>
            <person name="Siddiqui A."/>
            <person name="Wye N."/>
            <person name="McPherson J."/>
            <person name="Zhao S."/>
            <person name="Fraser C.M."/>
            <person name="Shetty J."/>
            <person name="Shatsman S."/>
            <person name="Geer K."/>
            <person name="Chen Y."/>
            <person name="Abramzon S."/>
            <person name="Nierman W.C."/>
            <person name="Havlak P.H."/>
            <person name="Chen R."/>
            <person name="Durbin K.J."/>
            <person name="Egan A."/>
            <person name="Ren Y."/>
            <person name="Song X.-Z."/>
            <person name="Li B."/>
            <person name="Liu Y."/>
            <person name="Qin X."/>
            <person name="Cawley S."/>
            <person name="Cooney A.J."/>
            <person name="D'Souza L.M."/>
            <person name="Martin K."/>
            <person name="Wu J.Q."/>
            <person name="Gonzalez-Garay M.L."/>
            <person name="Jackson A.R."/>
            <person name="Kalafus K.J."/>
            <person name="McLeod M.P."/>
            <person name="Milosavljevic A."/>
            <person name="Virk D."/>
            <person name="Volkov A."/>
            <person name="Wheeler D.A."/>
            <person name="Zhang Z."/>
            <person name="Bailey J.A."/>
            <person name="Eichler E.E."/>
            <person name="Tuzun E."/>
            <person name="Birney E."/>
            <person name="Mongin E."/>
            <person name="Ureta-Vidal A."/>
            <person name="Woodwark C."/>
            <person name="Zdobnov E."/>
            <person name="Bork P."/>
            <person name="Suyama M."/>
            <person name="Torrents D."/>
            <person name="Alexandersson M."/>
            <person name="Trask B.J."/>
            <person name="Young J.M."/>
            <person name="Huang H."/>
            <person name="Wang H."/>
            <person name="Xing H."/>
            <person name="Daniels S."/>
            <person name="Gietzen D."/>
            <person name="Schmidt J."/>
            <person name="Stevens K."/>
            <person name="Vitt U."/>
            <person name="Wingrove J."/>
            <person name="Camara F."/>
            <person name="Mar Alba M."/>
            <person name="Abril J.F."/>
            <person name="Guigo R."/>
            <person name="Smit A."/>
            <person name="Dubchak I."/>
            <person name="Rubin E.M."/>
            <person name="Couronne O."/>
            <person name="Poliakov A."/>
            <person name="Huebner N."/>
            <person name="Ganten D."/>
            <person name="Goesele C."/>
            <person name="Hummel O."/>
            <person name="Kreitler T."/>
            <person name="Lee Y.-A."/>
            <person name="Monti J."/>
            <person name="Schulz H."/>
            <person name="Zimdahl H."/>
            <person name="Himmelbauer H."/>
            <person name="Lehrach H."/>
            <person name="Jacob H.J."/>
            <person name="Bromberg S."/>
            <person name="Gullings-Handley J."/>
            <person name="Jensen-Seaman M.I."/>
            <person name="Kwitek A.E."/>
            <person name="Lazar J."/>
            <person name="Pasko D."/>
            <person name="Tonellato P.J."/>
            <person name="Twigger S."/>
            <person name="Ponting C.P."/>
            <person name="Duarte J.M."/>
            <person name="Rice S."/>
            <person name="Goodstadt L."/>
            <person name="Beatson S.A."/>
            <person name="Emes R.D."/>
            <person name="Winter E.E."/>
            <person name="Webber C."/>
            <person name="Brandt P."/>
            <person name="Nyakatura G."/>
            <person name="Adetobi M."/>
            <person name="Chiaromonte F."/>
            <person name="Elnitski L."/>
            <person name="Eswara P."/>
            <person name="Hardison R.C."/>
            <person name="Hou M."/>
            <person name="Kolbe D."/>
            <person name="Makova K."/>
            <person name="Miller W."/>
            <person name="Nekrutenko A."/>
            <person name="Riemer C."/>
            <person name="Schwartz S."/>
            <person name="Taylor J."/>
            <person name="Yang S."/>
            <person name="Zhang Y."/>
            <person name="Lindpaintner K."/>
            <person name="Andrews T.D."/>
            <person name="Caccamo M."/>
            <person name="Clamp M."/>
            <person name="Clarke L."/>
            <person name="Curwen V."/>
            <person name="Durbin R.M."/>
            <person name="Eyras E."/>
            <person name="Searle S.M."/>
            <person name="Cooper G.M."/>
            <person name="Batzoglou S."/>
            <person name="Brudno M."/>
            <person name="Sidow A."/>
            <person name="Stone E.A."/>
            <person name="Payseur B.A."/>
            <person name="Bourque G."/>
            <person name="Lopez-Otin C."/>
            <person name="Puente X.S."/>
            <person name="Chakrabarti K."/>
            <person name="Chatterji S."/>
            <person name="Dewey C."/>
            <person name="Pachter L."/>
            <person name="Bray N."/>
            <person name="Yap V.B."/>
            <person name="Caspi A."/>
            <person name="Tesler G."/>
            <person name="Pevzner P.A."/>
            <person name="Haussler D."/>
            <person name="Roskin K.M."/>
            <person name="Baertsch R."/>
            <person name="Clawson H."/>
            <person name="Furey T.S."/>
            <person name="Hinrichs A.S."/>
            <person name="Karolchik D."/>
            <person name="Kent W.J."/>
            <person name="Rosenbloom K.R."/>
            <person name="Trumbower H."/>
            <person name="Weirauch M."/>
            <person name="Cooper D.N."/>
            <person name="Stenson P.D."/>
            <person name="Ma B."/>
            <person name="Brent M."/>
            <person name="Arumugam M."/>
            <person name="Shteynberg D."/>
            <person name="Copley R.R."/>
            <person name="Taylor M.S."/>
            <person name="Riethman H."/>
            <person name="Mudunuri U."/>
            <person name="Peterson J."/>
            <person name="Guyer M."/>
            <person name="Felsenfeld A."/>
            <person name="Old S."/>
            <person name="Mockrin S."/>
            <person name="Collins F.S."/>
        </authorList>
    </citation>
    <scope>NUCLEOTIDE SEQUENCE [LARGE SCALE GENOMIC DNA]</scope>
    <source>
        <strain>Brown Norway</strain>
    </source>
</reference>
<reference key="3">
    <citation type="journal article" date="2002" name="Curr. Biol.">
        <title>Galpha(12) and Galpha(13) interact with Ser/Thr protein phosphatase type 5 and stimulate its phosphatase activity.</title>
        <authorList>
            <person name="Yamaguchi Y."/>
            <person name="Katoh H."/>
            <person name="Mori K."/>
            <person name="Negishi M."/>
        </authorList>
    </citation>
    <scope>FUNCTION</scope>
    <scope>INTERACTION WITH PPP5C</scope>
    <scope>SUBCELLULAR LOCATION</scope>
    <scope>MUTAGENESIS OF GLN-226</scope>
</reference>
<accession>Q6Q7Y5</accession>
<sequence length="377" mass="44012">MADFLPSRSVLSVCFPGCVLTNGEAEQQRKSKEIDKCLSREKTYVKRLVKILLLGAGESGKSTFLKQMRIIHGQDFDQRAREEFRPTIYSNVIKGMRVLVDAREKLHIPWGDNKNQVHGDKLMAFDTRAPMAAQGMVETRVFLQYLPAIRALWDDSGIQNAYDRRREFQLGESVKYFLDNLDKLGVPDYIPSQQDILLARRPTKGIHEYDFEIKNVPFKMVDVGGQRSERKRWFECFDSVTSILFLVSSSEFDQVLMEDRLTNRLTESLNIFETIVNNRVFSNVSIILFLNKTDLLEEKVQVVSIKDYFLEFEGDPHCLRDVQKFLVECFRGKRRDQQQRPLYHHFTTAINTENIRLVFRDVKDTILHDNLKQLMLQ</sequence>